<protein>
    <recommendedName>
        <fullName>Uncharacterized protein UU051</fullName>
    </recommendedName>
</protein>
<reference key="1">
    <citation type="journal article" date="2000" name="Nature">
        <title>The complete sequence of the mucosal pathogen Ureaplasma urealyticum.</title>
        <authorList>
            <person name="Glass J.I."/>
            <person name="Lefkowitz E.J."/>
            <person name="Glass J.S."/>
            <person name="Heiner C.R."/>
            <person name="Chen E.Y."/>
            <person name="Cassell G.H."/>
        </authorList>
    </citation>
    <scope>NUCLEOTIDE SEQUENCE [LARGE SCALE GENOMIC DNA]</scope>
    <source>
        <strain>ATCC 700970</strain>
    </source>
</reference>
<accession>Q9PR94</accession>
<sequence>MKMIMITMVVFMNHNYNIQITLLENKKFNIDNGLLYVNVNEENTWQKIENNTVLAYEIILLKIVDDDYKKTFYLFLKNTHISVLNNIVKIQALNDLHFFIKDGLNKKNNHKKELVDKYKNITNNILELEAKQQLGLTLSEFLDLDNLKQEQYITNMQIRLNLVEYKKDEK</sequence>
<name>Y051_UREPA</name>
<proteinExistence type="predicted"/>
<organism>
    <name type="scientific">Ureaplasma parvum serovar 3 (strain ATCC 700970)</name>
    <dbReference type="NCBI Taxonomy" id="273119"/>
    <lineage>
        <taxon>Bacteria</taxon>
        <taxon>Bacillati</taxon>
        <taxon>Mycoplasmatota</taxon>
        <taxon>Mycoplasmoidales</taxon>
        <taxon>Mycoplasmoidaceae</taxon>
        <taxon>Ureaplasma</taxon>
    </lineage>
</organism>
<feature type="chain" id="PRO_0000220793" description="Uncharacterized protein UU051">
    <location>
        <begin position="1"/>
        <end position="170"/>
    </location>
</feature>
<gene>
    <name type="ordered locus">UU051</name>
</gene>
<keyword id="KW-1185">Reference proteome</keyword>
<dbReference type="EMBL" id="AF222894">
    <property type="protein sequence ID" value="AAF30456.1"/>
    <property type="molecule type" value="Genomic_DNA"/>
</dbReference>
<dbReference type="STRING" id="273119.UU051"/>
<dbReference type="EnsemblBacteria" id="AAF30456">
    <property type="protein sequence ID" value="AAF30456"/>
    <property type="gene ID" value="UU051"/>
</dbReference>
<dbReference type="KEGG" id="uur:UU051"/>
<dbReference type="eggNOG" id="ENOG5034AM4">
    <property type="taxonomic scope" value="Bacteria"/>
</dbReference>
<dbReference type="HOGENOM" id="CLU_130375_0_0_14"/>
<dbReference type="Proteomes" id="UP000000423">
    <property type="component" value="Chromosome"/>
</dbReference>
<dbReference type="NCBIfam" id="NF045935">
    <property type="entry name" value="MSC_0621_epsi"/>
    <property type="match status" value="1"/>
</dbReference>